<keyword id="KW-1185">Reference proteome</keyword>
<keyword id="KW-0687">Ribonucleoprotein</keyword>
<keyword id="KW-0689">Ribosomal protein</keyword>
<keyword id="KW-0694">RNA-binding</keyword>
<keyword id="KW-0699">rRNA-binding</keyword>
<gene>
    <name evidence="1" type="primary">rplI</name>
    <name type="ordered locus">CD630_36580</name>
</gene>
<evidence type="ECO:0000255" key="1">
    <source>
        <dbReference type="HAMAP-Rule" id="MF_00503"/>
    </source>
</evidence>
<evidence type="ECO:0000305" key="2"/>
<name>RL9_CLOD6</name>
<organism>
    <name type="scientific">Clostridioides difficile (strain 630)</name>
    <name type="common">Peptoclostridium difficile</name>
    <dbReference type="NCBI Taxonomy" id="272563"/>
    <lineage>
        <taxon>Bacteria</taxon>
        <taxon>Bacillati</taxon>
        <taxon>Bacillota</taxon>
        <taxon>Clostridia</taxon>
        <taxon>Peptostreptococcales</taxon>
        <taxon>Peptostreptococcaceae</taxon>
        <taxon>Clostridioides</taxon>
    </lineage>
</organism>
<sequence>MKVILLKDVKGTGKKGEMKEVSDGYARNFLFPKKMAVQADSVAIKELNEKNKSKEIKAQKEYEEAVLLGKQMEEINIEIYSKAGEGGRLFGSITSKEIAEQLKKQKDIDVDKRKILLDEPIRSLGSTFVEIKIHQKVTTKIRVDVKEKQ</sequence>
<feature type="chain" id="PRO_0000258448" description="Large ribosomal subunit protein bL9">
    <location>
        <begin position="1"/>
        <end position="149"/>
    </location>
</feature>
<dbReference type="EMBL" id="AM180355">
    <property type="protein sequence ID" value="CAJ70566.1"/>
    <property type="molecule type" value="Genomic_DNA"/>
</dbReference>
<dbReference type="RefSeq" id="WP_003429267.1">
    <property type="nucleotide sequence ID" value="NZ_JAUPES010000007.1"/>
</dbReference>
<dbReference type="RefSeq" id="YP_001090182.1">
    <property type="nucleotide sequence ID" value="NC_009089.1"/>
</dbReference>
<dbReference type="SMR" id="Q181R0"/>
<dbReference type="STRING" id="272563.CD630_36580"/>
<dbReference type="EnsemblBacteria" id="CAJ70566">
    <property type="protein sequence ID" value="CAJ70566"/>
    <property type="gene ID" value="CD630_36580"/>
</dbReference>
<dbReference type="GeneID" id="66356129"/>
<dbReference type="KEGG" id="cdf:CD630_36580"/>
<dbReference type="KEGG" id="pdc:CDIF630_03986"/>
<dbReference type="PATRIC" id="fig|272563.120.peg.3868"/>
<dbReference type="eggNOG" id="COG0359">
    <property type="taxonomic scope" value="Bacteria"/>
</dbReference>
<dbReference type="OrthoDB" id="9788336at2"/>
<dbReference type="PhylomeDB" id="Q181R0"/>
<dbReference type="BioCyc" id="PDIF272563:G12WB-3849-MONOMER"/>
<dbReference type="Proteomes" id="UP000001978">
    <property type="component" value="Chromosome"/>
</dbReference>
<dbReference type="GO" id="GO:1990904">
    <property type="term" value="C:ribonucleoprotein complex"/>
    <property type="evidence" value="ECO:0007669"/>
    <property type="project" value="UniProtKB-KW"/>
</dbReference>
<dbReference type="GO" id="GO:0005840">
    <property type="term" value="C:ribosome"/>
    <property type="evidence" value="ECO:0007669"/>
    <property type="project" value="UniProtKB-KW"/>
</dbReference>
<dbReference type="GO" id="GO:0019843">
    <property type="term" value="F:rRNA binding"/>
    <property type="evidence" value="ECO:0007669"/>
    <property type="project" value="UniProtKB-UniRule"/>
</dbReference>
<dbReference type="GO" id="GO:0003735">
    <property type="term" value="F:structural constituent of ribosome"/>
    <property type="evidence" value="ECO:0007669"/>
    <property type="project" value="InterPro"/>
</dbReference>
<dbReference type="GO" id="GO:0006412">
    <property type="term" value="P:translation"/>
    <property type="evidence" value="ECO:0007669"/>
    <property type="project" value="UniProtKB-UniRule"/>
</dbReference>
<dbReference type="Gene3D" id="3.10.430.100">
    <property type="entry name" value="Ribosomal protein L9, C-terminal domain"/>
    <property type="match status" value="1"/>
</dbReference>
<dbReference type="Gene3D" id="3.40.5.10">
    <property type="entry name" value="Ribosomal protein L9, N-terminal domain"/>
    <property type="match status" value="1"/>
</dbReference>
<dbReference type="HAMAP" id="MF_00503">
    <property type="entry name" value="Ribosomal_bL9"/>
    <property type="match status" value="1"/>
</dbReference>
<dbReference type="InterPro" id="IPR000244">
    <property type="entry name" value="Ribosomal_bL9"/>
</dbReference>
<dbReference type="InterPro" id="IPR009027">
    <property type="entry name" value="Ribosomal_bL9/RNase_H1_N"/>
</dbReference>
<dbReference type="InterPro" id="IPR020594">
    <property type="entry name" value="Ribosomal_bL9_bac/chp"/>
</dbReference>
<dbReference type="InterPro" id="IPR020069">
    <property type="entry name" value="Ribosomal_bL9_C"/>
</dbReference>
<dbReference type="InterPro" id="IPR036791">
    <property type="entry name" value="Ribosomal_bL9_C_sf"/>
</dbReference>
<dbReference type="InterPro" id="IPR020070">
    <property type="entry name" value="Ribosomal_bL9_N"/>
</dbReference>
<dbReference type="InterPro" id="IPR036935">
    <property type="entry name" value="Ribosomal_bL9_N_sf"/>
</dbReference>
<dbReference type="NCBIfam" id="TIGR00158">
    <property type="entry name" value="L9"/>
    <property type="match status" value="1"/>
</dbReference>
<dbReference type="PANTHER" id="PTHR21368">
    <property type="entry name" value="50S RIBOSOMAL PROTEIN L9"/>
    <property type="match status" value="1"/>
</dbReference>
<dbReference type="Pfam" id="PF03948">
    <property type="entry name" value="Ribosomal_L9_C"/>
    <property type="match status" value="1"/>
</dbReference>
<dbReference type="Pfam" id="PF01281">
    <property type="entry name" value="Ribosomal_L9_N"/>
    <property type="match status" value="1"/>
</dbReference>
<dbReference type="SUPFAM" id="SSF55658">
    <property type="entry name" value="L9 N-domain-like"/>
    <property type="match status" value="1"/>
</dbReference>
<dbReference type="SUPFAM" id="SSF55653">
    <property type="entry name" value="Ribosomal protein L9 C-domain"/>
    <property type="match status" value="1"/>
</dbReference>
<protein>
    <recommendedName>
        <fullName evidence="1">Large ribosomal subunit protein bL9</fullName>
    </recommendedName>
    <alternativeName>
        <fullName evidence="2">50S ribosomal protein L9</fullName>
    </alternativeName>
</protein>
<proteinExistence type="inferred from homology"/>
<reference key="1">
    <citation type="journal article" date="2006" name="Nat. Genet.">
        <title>The multidrug-resistant human pathogen Clostridium difficile has a highly mobile, mosaic genome.</title>
        <authorList>
            <person name="Sebaihia M."/>
            <person name="Wren B.W."/>
            <person name="Mullany P."/>
            <person name="Fairweather N.F."/>
            <person name="Minton N."/>
            <person name="Stabler R."/>
            <person name="Thomson N.R."/>
            <person name="Roberts A.P."/>
            <person name="Cerdeno-Tarraga A.M."/>
            <person name="Wang H."/>
            <person name="Holden M.T.G."/>
            <person name="Wright A."/>
            <person name="Churcher C."/>
            <person name="Quail M.A."/>
            <person name="Baker S."/>
            <person name="Bason N."/>
            <person name="Brooks K."/>
            <person name="Chillingworth T."/>
            <person name="Cronin A."/>
            <person name="Davis P."/>
            <person name="Dowd L."/>
            <person name="Fraser A."/>
            <person name="Feltwell T."/>
            <person name="Hance Z."/>
            <person name="Holroyd S."/>
            <person name="Jagels K."/>
            <person name="Moule S."/>
            <person name="Mungall K."/>
            <person name="Price C."/>
            <person name="Rabbinowitsch E."/>
            <person name="Sharp S."/>
            <person name="Simmonds M."/>
            <person name="Stevens K."/>
            <person name="Unwin L."/>
            <person name="Whithead S."/>
            <person name="Dupuy B."/>
            <person name="Dougan G."/>
            <person name="Barrell B."/>
            <person name="Parkhill J."/>
        </authorList>
    </citation>
    <scope>NUCLEOTIDE SEQUENCE [LARGE SCALE GENOMIC DNA]</scope>
    <source>
        <strain>630</strain>
    </source>
</reference>
<comment type="function">
    <text evidence="1">Binds to the 23S rRNA.</text>
</comment>
<comment type="similarity">
    <text evidence="1">Belongs to the bacterial ribosomal protein bL9 family.</text>
</comment>
<accession>Q181R0</accession>